<keyword id="KW-0002">3D-structure</keyword>
<keyword id="KW-0028">Amino-acid biosynthesis</keyword>
<keyword id="KW-0057">Aromatic amino acid biosynthesis</keyword>
<keyword id="KW-0456">Lyase</keyword>
<keyword id="KW-1185">Reference proteome</keyword>
<keyword id="KW-0704">Schiff base</keyword>
<organism>
    <name type="scientific">Archaeoglobus fulgidus (strain ATCC 49558 / DSM 4304 / JCM 9628 / NBRC 100126 / VC-16)</name>
    <dbReference type="NCBI Taxonomy" id="224325"/>
    <lineage>
        <taxon>Archaea</taxon>
        <taxon>Methanobacteriati</taxon>
        <taxon>Methanobacteriota</taxon>
        <taxon>Archaeoglobi</taxon>
        <taxon>Archaeoglobales</taxon>
        <taxon>Archaeoglobaceae</taxon>
        <taxon>Archaeoglobus</taxon>
    </lineage>
</organism>
<dbReference type="EC" id="4.2.1.10" evidence="1"/>
<dbReference type="EMBL" id="AE000782">
    <property type="protein sequence ID" value="AAB91004.1"/>
    <property type="molecule type" value="Genomic_DNA"/>
</dbReference>
<dbReference type="PIR" id="D69278">
    <property type="entry name" value="D69278"/>
</dbReference>
<dbReference type="RefSeq" id="WP_010877739.1">
    <property type="nucleotide sequence ID" value="NC_000917.1"/>
</dbReference>
<dbReference type="PDB" id="2OX1">
    <property type="method" value="X-ray"/>
    <property type="resolution" value="2.33 A"/>
    <property type="chains" value="A/B/C/D=1-196"/>
</dbReference>
<dbReference type="PDBsum" id="2OX1"/>
<dbReference type="SMR" id="O30011"/>
<dbReference type="STRING" id="224325.AF_0228"/>
<dbReference type="PaxDb" id="224325-AF_0228"/>
<dbReference type="EnsemblBacteria" id="AAB91004">
    <property type="protein sequence ID" value="AAB91004"/>
    <property type="gene ID" value="AF_0228"/>
</dbReference>
<dbReference type="GeneID" id="24793762"/>
<dbReference type="KEGG" id="afu:AF_0228"/>
<dbReference type="eggNOG" id="arCOG02097">
    <property type="taxonomic scope" value="Archaea"/>
</dbReference>
<dbReference type="HOGENOM" id="CLU_064444_2_0_2"/>
<dbReference type="OrthoDB" id="34329at2157"/>
<dbReference type="PhylomeDB" id="O30011"/>
<dbReference type="BRENDA" id="4.2.1.10">
    <property type="organism ID" value="414"/>
</dbReference>
<dbReference type="UniPathway" id="UPA00053">
    <property type="reaction ID" value="UER00086"/>
</dbReference>
<dbReference type="EvolutionaryTrace" id="O30011"/>
<dbReference type="Proteomes" id="UP000002199">
    <property type="component" value="Chromosome"/>
</dbReference>
<dbReference type="GO" id="GO:0003855">
    <property type="term" value="F:3-dehydroquinate dehydratase activity"/>
    <property type="evidence" value="ECO:0007669"/>
    <property type="project" value="UniProtKB-UniRule"/>
</dbReference>
<dbReference type="GO" id="GO:0046279">
    <property type="term" value="P:3,4-dihydroxybenzoate biosynthetic process"/>
    <property type="evidence" value="ECO:0007669"/>
    <property type="project" value="TreeGrafter"/>
</dbReference>
<dbReference type="GO" id="GO:0008652">
    <property type="term" value="P:amino acid biosynthetic process"/>
    <property type="evidence" value="ECO:0007669"/>
    <property type="project" value="UniProtKB-KW"/>
</dbReference>
<dbReference type="GO" id="GO:0009073">
    <property type="term" value="P:aromatic amino acid family biosynthetic process"/>
    <property type="evidence" value="ECO:0007669"/>
    <property type="project" value="UniProtKB-KW"/>
</dbReference>
<dbReference type="GO" id="GO:0009423">
    <property type="term" value="P:chorismate biosynthetic process"/>
    <property type="evidence" value="ECO:0007669"/>
    <property type="project" value="UniProtKB-UniRule"/>
</dbReference>
<dbReference type="CDD" id="cd00502">
    <property type="entry name" value="DHQase_I"/>
    <property type="match status" value="1"/>
</dbReference>
<dbReference type="Gene3D" id="3.20.20.70">
    <property type="entry name" value="Aldolase class I"/>
    <property type="match status" value="1"/>
</dbReference>
<dbReference type="HAMAP" id="MF_00214">
    <property type="entry name" value="AroD"/>
    <property type="match status" value="1"/>
</dbReference>
<dbReference type="InterPro" id="IPR013785">
    <property type="entry name" value="Aldolase_TIM"/>
</dbReference>
<dbReference type="InterPro" id="IPR001381">
    <property type="entry name" value="DHquinase_I"/>
</dbReference>
<dbReference type="InterPro" id="IPR050146">
    <property type="entry name" value="Type-I_3-dehydroquinase"/>
</dbReference>
<dbReference type="NCBIfam" id="TIGR01093">
    <property type="entry name" value="aroD"/>
    <property type="match status" value="1"/>
</dbReference>
<dbReference type="PANTHER" id="PTHR43699">
    <property type="entry name" value="3-DEHYDROQUINATE DEHYDRATASE"/>
    <property type="match status" value="1"/>
</dbReference>
<dbReference type="PANTHER" id="PTHR43699:SF1">
    <property type="entry name" value="3-DEHYDROQUINATE DEHYDRATASE"/>
    <property type="match status" value="1"/>
</dbReference>
<dbReference type="Pfam" id="PF01487">
    <property type="entry name" value="DHquinase_I"/>
    <property type="match status" value="1"/>
</dbReference>
<dbReference type="SUPFAM" id="SSF51569">
    <property type="entry name" value="Aldolase"/>
    <property type="match status" value="1"/>
</dbReference>
<comment type="function">
    <text evidence="1">Involved in the third step of the chorismate pathway, which leads to the biosynthesis of aromatic amino acids. Catalyzes the cis-dehydration of 3-dehydroquinate (DHQ) and introduces the first double bond of the aromatic ring to yield 3-dehydroshikimate.</text>
</comment>
<comment type="catalytic activity">
    <reaction evidence="1">
        <text>3-dehydroquinate = 3-dehydroshikimate + H2O</text>
        <dbReference type="Rhea" id="RHEA:21096"/>
        <dbReference type="ChEBI" id="CHEBI:15377"/>
        <dbReference type="ChEBI" id="CHEBI:16630"/>
        <dbReference type="ChEBI" id="CHEBI:32364"/>
        <dbReference type="EC" id="4.2.1.10"/>
    </reaction>
</comment>
<comment type="pathway">
    <text evidence="1">Metabolic intermediate biosynthesis; chorismate biosynthesis; chorismate from D-erythrose 4-phosphate and phosphoenolpyruvate: step 3/7.</text>
</comment>
<comment type="subunit">
    <text evidence="1 2">Homodimer.</text>
</comment>
<comment type="similarity">
    <text evidence="1">Belongs to the type-I 3-dehydroquinase family.</text>
</comment>
<name>AROD_ARCFU</name>
<gene>
    <name evidence="1" type="primary">aroD</name>
    <name type="ordered locus">AF_0228</name>
</gene>
<reference key="1">
    <citation type="journal article" date="1997" name="Nature">
        <title>The complete genome sequence of the hyperthermophilic, sulphate-reducing archaeon Archaeoglobus fulgidus.</title>
        <authorList>
            <person name="Klenk H.-P."/>
            <person name="Clayton R.A."/>
            <person name="Tomb J.-F."/>
            <person name="White O."/>
            <person name="Nelson K.E."/>
            <person name="Ketchum K.A."/>
            <person name="Dodson R.J."/>
            <person name="Gwinn M.L."/>
            <person name="Hickey E.K."/>
            <person name="Peterson J.D."/>
            <person name="Richardson D.L."/>
            <person name="Kerlavage A.R."/>
            <person name="Graham D.E."/>
            <person name="Kyrpides N.C."/>
            <person name="Fleischmann R.D."/>
            <person name="Quackenbush J."/>
            <person name="Lee N.H."/>
            <person name="Sutton G.G."/>
            <person name="Gill S.R."/>
            <person name="Kirkness E.F."/>
            <person name="Dougherty B.A."/>
            <person name="McKenney K."/>
            <person name="Adams M.D."/>
            <person name="Loftus B.J."/>
            <person name="Peterson S.N."/>
            <person name="Reich C.I."/>
            <person name="McNeil L.K."/>
            <person name="Badger J.H."/>
            <person name="Glodek A."/>
            <person name="Zhou L."/>
            <person name="Overbeek R."/>
            <person name="Gocayne J.D."/>
            <person name="Weidman J.F."/>
            <person name="McDonald L.A."/>
            <person name="Utterback T.R."/>
            <person name="Cotton M.D."/>
            <person name="Spriggs T."/>
            <person name="Artiach P."/>
            <person name="Kaine B.P."/>
            <person name="Sykes S.M."/>
            <person name="Sadow P.W."/>
            <person name="D'Andrea K.P."/>
            <person name="Bowman C."/>
            <person name="Fujii C."/>
            <person name="Garland S.A."/>
            <person name="Mason T.M."/>
            <person name="Olsen G.J."/>
            <person name="Fraser C.M."/>
            <person name="Smith H.O."/>
            <person name="Woese C.R."/>
            <person name="Venter J.C."/>
        </authorList>
    </citation>
    <scope>NUCLEOTIDE SEQUENCE [LARGE SCALE GENOMIC DNA]</scope>
    <source>
        <strain>ATCC 49558 / DSM 4304 / JCM 9628 / NBRC 100126 / VC-16</strain>
    </source>
</reference>
<reference key="2">
    <citation type="journal article" date="2008" name="Acta Crystallogr. F">
        <title>Structure and lability of archaeal dehydroquinase.</title>
        <authorList>
            <person name="Smith N.N."/>
            <person name="Gallagher D.T."/>
        </authorList>
    </citation>
    <scope>X-RAY CRYSTALLOGRAPHY (2.33 ANGSTROMS)</scope>
    <scope>SUBUNIT</scope>
</reference>
<proteinExistence type="evidence at protein level"/>
<feature type="chain" id="PRO_0000138826" description="3-dehydroquinate dehydratase">
    <location>
        <begin position="1"/>
        <end position="196"/>
    </location>
</feature>
<feature type="active site" description="Proton donor/acceptor" evidence="1">
    <location>
        <position position="98"/>
    </location>
</feature>
<feature type="active site" description="Schiff-base intermediate with substrate" evidence="1">
    <location>
        <position position="122"/>
    </location>
</feature>
<feature type="binding site" evidence="1">
    <location>
        <begin position="23"/>
        <end position="25"/>
    </location>
    <ligand>
        <name>3-dehydroquinate</name>
        <dbReference type="ChEBI" id="CHEBI:32364"/>
    </ligand>
</feature>
<feature type="binding site" evidence="1">
    <location>
        <position position="45"/>
    </location>
    <ligand>
        <name>3-dehydroquinate</name>
        <dbReference type="ChEBI" id="CHEBI:32364"/>
    </ligand>
</feature>
<feature type="binding site" evidence="1">
    <location>
        <position position="159"/>
    </location>
    <ligand>
        <name>3-dehydroquinate</name>
        <dbReference type="ChEBI" id="CHEBI:32364"/>
    </ligand>
</feature>
<feature type="binding site" evidence="1">
    <location>
        <position position="182"/>
    </location>
    <ligand>
        <name>3-dehydroquinate</name>
        <dbReference type="ChEBI" id="CHEBI:32364"/>
    </ligand>
</feature>
<feature type="strand" evidence="3">
    <location>
        <begin position="2"/>
        <end position="7"/>
    </location>
</feature>
<feature type="helix" evidence="3">
    <location>
        <begin position="10"/>
        <end position="15"/>
    </location>
</feature>
<feature type="turn" evidence="3">
    <location>
        <begin position="16"/>
        <end position="18"/>
    </location>
</feature>
<feature type="strand" evidence="3">
    <location>
        <begin position="20"/>
        <end position="25"/>
    </location>
</feature>
<feature type="turn" evidence="3">
    <location>
        <begin position="26"/>
        <end position="28"/>
    </location>
</feature>
<feature type="strand" evidence="3">
    <location>
        <begin position="38"/>
        <end position="43"/>
    </location>
</feature>
<feature type="helix" evidence="3">
    <location>
        <begin position="47"/>
        <end position="49"/>
    </location>
</feature>
<feature type="strand" evidence="3">
    <location>
        <begin position="51"/>
        <end position="53"/>
    </location>
</feature>
<feature type="helix" evidence="3">
    <location>
        <begin position="57"/>
        <end position="71"/>
    </location>
</feature>
<feature type="strand" evidence="3">
    <location>
        <begin position="74"/>
        <end position="79"/>
    </location>
</feature>
<feature type="helix" evidence="3">
    <location>
        <begin position="84"/>
        <end position="86"/>
    </location>
</feature>
<feature type="strand" evidence="3">
    <location>
        <begin position="90"/>
        <end position="101"/>
    </location>
</feature>
<feature type="helix" evidence="3">
    <location>
        <begin position="106"/>
        <end position="114"/>
    </location>
</feature>
<feature type="strand" evidence="3">
    <location>
        <begin position="118"/>
        <end position="126"/>
    </location>
</feature>
<feature type="helix" evidence="3">
    <location>
        <begin position="130"/>
        <end position="142"/>
    </location>
</feature>
<feature type="strand" evidence="3">
    <location>
        <begin position="144"/>
        <end position="152"/>
    </location>
</feature>
<feature type="helix" evidence="3">
    <location>
        <begin position="153"/>
        <end position="156"/>
    </location>
</feature>
<feature type="helix" evidence="3">
    <location>
        <begin position="157"/>
        <end position="164"/>
    </location>
</feature>
<feature type="strand" evidence="3">
    <location>
        <begin position="168"/>
        <end position="176"/>
    </location>
</feature>
<feature type="helix" evidence="3">
    <location>
        <begin position="185"/>
        <end position="195"/>
    </location>
</feature>
<accession>O30011</accession>
<protein>
    <recommendedName>
        <fullName evidence="1">3-dehydroquinate dehydratase</fullName>
        <shortName evidence="1">3-dehydroquinase</shortName>
        <ecNumber evidence="1">4.2.1.10</ecNumber>
    </recommendedName>
    <alternativeName>
        <fullName evidence="1">Type I DHQase</fullName>
    </alternativeName>
    <alternativeName>
        <fullName evidence="1">Type I dehydroquinase</fullName>
        <shortName evidence="1">DHQ1</shortName>
    </alternativeName>
</protein>
<sequence length="196" mass="22207">MKLVATLSSPEELELAEKADVVELRIDLFDFSGARVDKEKILTCRRVSDGGKFEGDERERIEKMKRAFDSLNPDYVDLESDLPDSAFDFNCRIIESYHNFIRTPDYSELKGIVEGRRGDLVKIATMGKSKRDVETIVRILTNYDDVVAFLMGERFSFTRVLAAYLGSPFIYCYVGSPKAPGQISLDDAREIISRLG</sequence>
<evidence type="ECO:0000255" key="1">
    <source>
        <dbReference type="HAMAP-Rule" id="MF_00214"/>
    </source>
</evidence>
<evidence type="ECO:0000269" key="2">
    <source>
    </source>
</evidence>
<evidence type="ECO:0007829" key="3">
    <source>
        <dbReference type="PDB" id="2OX1"/>
    </source>
</evidence>